<comment type="function">
    <text evidence="1">Endonuclease that specifically degrades the RNA of RNA-DNA hybrids.</text>
</comment>
<comment type="catalytic activity">
    <reaction evidence="1">
        <text>Endonucleolytic cleavage to 5'-phosphomonoester.</text>
        <dbReference type="EC" id="3.1.26.4"/>
    </reaction>
</comment>
<comment type="cofactor">
    <cofactor evidence="1">
        <name>Mn(2+)</name>
        <dbReference type="ChEBI" id="CHEBI:29035"/>
    </cofactor>
    <cofactor evidence="1">
        <name>Mg(2+)</name>
        <dbReference type="ChEBI" id="CHEBI:18420"/>
    </cofactor>
    <text evidence="1">Manganese or magnesium. Binds 1 divalent metal ion per monomer in the absence of substrate. May bind a second metal ion after substrate binding.</text>
</comment>
<comment type="subcellular location">
    <subcellularLocation>
        <location evidence="1">Cytoplasm</location>
    </subcellularLocation>
</comment>
<comment type="similarity">
    <text evidence="1">Belongs to the RNase HII family.</text>
</comment>
<gene>
    <name evidence="1" type="primary">rnhB</name>
    <name type="ordered locus">Reut_A1867</name>
</gene>
<dbReference type="EC" id="3.1.26.4" evidence="1"/>
<dbReference type="EMBL" id="CP000090">
    <property type="protein sequence ID" value="AAZ61232.1"/>
    <property type="molecule type" value="Genomic_DNA"/>
</dbReference>
<dbReference type="SMR" id="Q470F1"/>
<dbReference type="STRING" id="264198.Reut_A1867"/>
<dbReference type="KEGG" id="reu:Reut_A1867"/>
<dbReference type="eggNOG" id="COG0164">
    <property type="taxonomic scope" value="Bacteria"/>
</dbReference>
<dbReference type="HOGENOM" id="CLU_036532_3_2_4"/>
<dbReference type="OrthoDB" id="9803420at2"/>
<dbReference type="GO" id="GO:0005737">
    <property type="term" value="C:cytoplasm"/>
    <property type="evidence" value="ECO:0007669"/>
    <property type="project" value="UniProtKB-SubCell"/>
</dbReference>
<dbReference type="GO" id="GO:0032299">
    <property type="term" value="C:ribonuclease H2 complex"/>
    <property type="evidence" value="ECO:0007669"/>
    <property type="project" value="TreeGrafter"/>
</dbReference>
<dbReference type="GO" id="GO:0030145">
    <property type="term" value="F:manganese ion binding"/>
    <property type="evidence" value="ECO:0007669"/>
    <property type="project" value="UniProtKB-UniRule"/>
</dbReference>
<dbReference type="GO" id="GO:0003723">
    <property type="term" value="F:RNA binding"/>
    <property type="evidence" value="ECO:0007669"/>
    <property type="project" value="InterPro"/>
</dbReference>
<dbReference type="GO" id="GO:0004523">
    <property type="term" value="F:RNA-DNA hybrid ribonuclease activity"/>
    <property type="evidence" value="ECO:0007669"/>
    <property type="project" value="UniProtKB-UniRule"/>
</dbReference>
<dbReference type="GO" id="GO:0043137">
    <property type="term" value="P:DNA replication, removal of RNA primer"/>
    <property type="evidence" value="ECO:0007669"/>
    <property type="project" value="TreeGrafter"/>
</dbReference>
<dbReference type="GO" id="GO:0006298">
    <property type="term" value="P:mismatch repair"/>
    <property type="evidence" value="ECO:0007669"/>
    <property type="project" value="TreeGrafter"/>
</dbReference>
<dbReference type="CDD" id="cd07182">
    <property type="entry name" value="RNase_HII_bacteria_HII_like"/>
    <property type="match status" value="1"/>
</dbReference>
<dbReference type="FunFam" id="3.30.420.10:FF:000006">
    <property type="entry name" value="Ribonuclease HII"/>
    <property type="match status" value="1"/>
</dbReference>
<dbReference type="Gene3D" id="3.30.420.10">
    <property type="entry name" value="Ribonuclease H-like superfamily/Ribonuclease H"/>
    <property type="match status" value="1"/>
</dbReference>
<dbReference type="HAMAP" id="MF_00052_B">
    <property type="entry name" value="RNase_HII_B"/>
    <property type="match status" value="1"/>
</dbReference>
<dbReference type="InterPro" id="IPR022898">
    <property type="entry name" value="RNase_HII"/>
</dbReference>
<dbReference type="InterPro" id="IPR001352">
    <property type="entry name" value="RNase_HII/HIII"/>
</dbReference>
<dbReference type="InterPro" id="IPR024567">
    <property type="entry name" value="RNase_HII/HIII_dom"/>
</dbReference>
<dbReference type="InterPro" id="IPR012337">
    <property type="entry name" value="RNaseH-like_sf"/>
</dbReference>
<dbReference type="InterPro" id="IPR036397">
    <property type="entry name" value="RNaseH_sf"/>
</dbReference>
<dbReference type="NCBIfam" id="NF000595">
    <property type="entry name" value="PRK00015.1-3"/>
    <property type="match status" value="1"/>
</dbReference>
<dbReference type="NCBIfam" id="NF000596">
    <property type="entry name" value="PRK00015.1-4"/>
    <property type="match status" value="1"/>
</dbReference>
<dbReference type="PANTHER" id="PTHR10954">
    <property type="entry name" value="RIBONUCLEASE H2 SUBUNIT A"/>
    <property type="match status" value="1"/>
</dbReference>
<dbReference type="PANTHER" id="PTHR10954:SF18">
    <property type="entry name" value="RIBONUCLEASE HII"/>
    <property type="match status" value="1"/>
</dbReference>
<dbReference type="Pfam" id="PF01351">
    <property type="entry name" value="RNase_HII"/>
    <property type="match status" value="1"/>
</dbReference>
<dbReference type="SUPFAM" id="SSF53098">
    <property type="entry name" value="Ribonuclease H-like"/>
    <property type="match status" value="1"/>
</dbReference>
<dbReference type="PROSITE" id="PS51975">
    <property type="entry name" value="RNASE_H_2"/>
    <property type="match status" value="1"/>
</dbReference>
<sequence length="218" mass="23247">MARGNLSSAQMGLDLAPVAASVRFLCGVDEAGRGPLAGPVYAAAVVFDPAKPMLRGLADSKVLTASKREALYDKICERALGWHIAFATVEEIDTLNILHASMLAMQRAVQGLAEKGVTPDLVQVDGNRCPQVPFPVEAIVKGDSLVKAISAASILAKVARDRELLTLHEVYPQYGFDAHSGYPTPQHLAALAQFGATPHHRRSFAPVREAIARGLVAF</sequence>
<reference key="1">
    <citation type="journal article" date="2010" name="PLoS ONE">
        <title>The complete multipartite genome sequence of Cupriavidus necator JMP134, a versatile pollutant degrader.</title>
        <authorList>
            <person name="Lykidis A."/>
            <person name="Perez-Pantoja D."/>
            <person name="Ledger T."/>
            <person name="Mavromatis K."/>
            <person name="Anderson I.J."/>
            <person name="Ivanova N.N."/>
            <person name="Hooper S.D."/>
            <person name="Lapidus A."/>
            <person name="Lucas S."/>
            <person name="Gonzalez B."/>
            <person name="Kyrpides N.C."/>
        </authorList>
    </citation>
    <scope>NUCLEOTIDE SEQUENCE [LARGE SCALE GENOMIC DNA]</scope>
    <source>
        <strain>JMP134 / LMG 1197</strain>
    </source>
</reference>
<evidence type="ECO:0000255" key="1">
    <source>
        <dbReference type="HAMAP-Rule" id="MF_00052"/>
    </source>
</evidence>
<evidence type="ECO:0000255" key="2">
    <source>
        <dbReference type="PROSITE-ProRule" id="PRU01319"/>
    </source>
</evidence>
<proteinExistence type="inferred from homology"/>
<protein>
    <recommendedName>
        <fullName evidence="1">Ribonuclease HII</fullName>
        <shortName evidence="1">RNase HII</shortName>
        <ecNumber evidence="1">3.1.26.4</ecNumber>
    </recommendedName>
</protein>
<accession>Q470F1</accession>
<keyword id="KW-0963">Cytoplasm</keyword>
<keyword id="KW-0255">Endonuclease</keyword>
<keyword id="KW-0378">Hydrolase</keyword>
<keyword id="KW-0464">Manganese</keyword>
<keyword id="KW-0479">Metal-binding</keyword>
<keyword id="KW-0540">Nuclease</keyword>
<organism>
    <name type="scientific">Cupriavidus pinatubonensis (strain JMP 134 / LMG 1197)</name>
    <name type="common">Cupriavidus necator (strain JMP 134)</name>
    <dbReference type="NCBI Taxonomy" id="264198"/>
    <lineage>
        <taxon>Bacteria</taxon>
        <taxon>Pseudomonadati</taxon>
        <taxon>Pseudomonadota</taxon>
        <taxon>Betaproteobacteria</taxon>
        <taxon>Burkholderiales</taxon>
        <taxon>Burkholderiaceae</taxon>
        <taxon>Cupriavidus</taxon>
    </lineage>
</organism>
<name>RNH2_CUPPJ</name>
<feature type="chain" id="PRO_0000235758" description="Ribonuclease HII">
    <location>
        <begin position="1"/>
        <end position="218"/>
    </location>
</feature>
<feature type="domain" description="RNase H type-2" evidence="2">
    <location>
        <begin position="23"/>
        <end position="216"/>
    </location>
</feature>
<feature type="binding site" evidence="1">
    <location>
        <position position="29"/>
    </location>
    <ligand>
        <name>a divalent metal cation</name>
        <dbReference type="ChEBI" id="CHEBI:60240"/>
    </ligand>
</feature>
<feature type="binding site" evidence="1">
    <location>
        <position position="30"/>
    </location>
    <ligand>
        <name>a divalent metal cation</name>
        <dbReference type="ChEBI" id="CHEBI:60240"/>
    </ligand>
</feature>
<feature type="binding site" evidence="1">
    <location>
        <position position="125"/>
    </location>
    <ligand>
        <name>a divalent metal cation</name>
        <dbReference type="ChEBI" id="CHEBI:60240"/>
    </ligand>
</feature>